<keyword id="KW-0028">Amino-acid biosynthesis</keyword>
<keyword id="KW-0963">Cytoplasm</keyword>
<keyword id="KW-0554">One-carbon metabolism</keyword>
<keyword id="KW-0663">Pyridoxal phosphate</keyword>
<keyword id="KW-1185">Reference proteome</keyword>
<keyword id="KW-0808">Transferase</keyword>
<name>GLYA1_AGRFC</name>
<feature type="chain" id="PRO_0000113519" description="Serine hydroxymethyltransferase 1">
    <location>
        <begin position="1"/>
        <end position="429"/>
    </location>
</feature>
<feature type="binding site" evidence="1">
    <location>
        <position position="125"/>
    </location>
    <ligand>
        <name>(6S)-5,6,7,8-tetrahydrofolate</name>
        <dbReference type="ChEBI" id="CHEBI:57453"/>
    </ligand>
</feature>
<feature type="binding site" evidence="1">
    <location>
        <begin position="129"/>
        <end position="131"/>
    </location>
    <ligand>
        <name>(6S)-5,6,7,8-tetrahydrofolate</name>
        <dbReference type="ChEBI" id="CHEBI:57453"/>
    </ligand>
</feature>
<feature type="site" description="Plays an important role in substrate specificity" evidence="1">
    <location>
        <position position="233"/>
    </location>
</feature>
<feature type="modified residue" description="N6-(pyridoxal phosphate)lysine" evidence="1">
    <location>
        <position position="234"/>
    </location>
</feature>
<gene>
    <name evidence="1" type="primary">glyA1</name>
    <name type="ordered locus">Atu1165</name>
    <name type="ORF">AGR_C_2156</name>
</gene>
<reference key="1">
    <citation type="journal article" date="2001" name="Science">
        <title>The genome of the natural genetic engineer Agrobacterium tumefaciens C58.</title>
        <authorList>
            <person name="Wood D.W."/>
            <person name="Setubal J.C."/>
            <person name="Kaul R."/>
            <person name="Monks D.E."/>
            <person name="Kitajima J.P."/>
            <person name="Okura V.K."/>
            <person name="Zhou Y."/>
            <person name="Chen L."/>
            <person name="Wood G.E."/>
            <person name="Almeida N.F. Jr."/>
            <person name="Woo L."/>
            <person name="Chen Y."/>
            <person name="Paulsen I.T."/>
            <person name="Eisen J.A."/>
            <person name="Karp P.D."/>
            <person name="Bovee D. Sr."/>
            <person name="Chapman P."/>
            <person name="Clendenning J."/>
            <person name="Deatherage G."/>
            <person name="Gillet W."/>
            <person name="Grant C."/>
            <person name="Kutyavin T."/>
            <person name="Levy R."/>
            <person name="Li M.-J."/>
            <person name="McClelland E."/>
            <person name="Palmieri A."/>
            <person name="Raymond C."/>
            <person name="Rouse G."/>
            <person name="Saenphimmachak C."/>
            <person name="Wu Z."/>
            <person name="Romero P."/>
            <person name="Gordon D."/>
            <person name="Zhang S."/>
            <person name="Yoo H."/>
            <person name="Tao Y."/>
            <person name="Biddle P."/>
            <person name="Jung M."/>
            <person name="Krespan W."/>
            <person name="Perry M."/>
            <person name="Gordon-Kamm B."/>
            <person name="Liao L."/>
            <person name="Kim S."/>
            <person name="Hendrick C."/>
            <person name="Zhao Z.-Y."/>
            <person name="Dolan M."/>
            <person name="Chumley F."/>
            <person name="Tingey S.V."/>
            <person name="Tomb J.-F."/>
            <person name="Gordon M.P."/>
            <person name="Olson M.V."/>
            <person name="Nester E.W."/>
        </authorList>
    </citation>
    <scope>NUCLEOTIDE SEQUENCE [LARGE SCALE GENOMIC DNA]</scope>
    <source>
        <strain>C58 / ATCC 33970</strain>
    </source>
</reference>
<reference key="2">
    <citation type="journal article" date="2001" name="Science">
        <title>Genome sequence of the plant pathogen and biotechnology agent Agrobacterium tumefaciens C58.</title>
        <authorList>
            <person name="Goodner B."/>
            <person name="Hinkle G."/>
            <person name="Gattung S."/>
            <person name="Miller N."/>
            <person name="Blanchard M."/>
            <person name="Qurollo B."/>
            <person name="Goldman B.S."/>
            <person name="Cao Y."/>
            <person name="Askenazi M."/>
            <person name="Halling C."/>
            <person name="Mullin L."/>
            <person name="Houmiel K."/>
            <person name="Gordon J."/>
            <person name="Vaudin M."/>
            <person name="Iartchouk O."/>
            <person name="Epp A."/>
            <person name="Liu F."/>
            <person name="Wollam C."/>
            <person name="Allinger M."/>
            <person name="Doughty D."/>
            <person name="Scott C."/>
            <person name="Lappas C."/>
            <person name="Markelz B."/>
            <person name="Flanagan C."/>
            <person name="Crowell C."/>
            <person name="Gurson J."/>
            <person name="Lomo C."/>
            <person name="Sear C."/>
            <person name="Strub G."/>
            <person name="Cielo C."/>
            <person name="Slater S."/>
        </authorList>
    </citation>
    <scope>NUCLEOTIDE SEQUENCE [LARGE SCALE GENOMIC DNA]</scope>
    <source>
        <strain>C58 / ATCC 33970</strain>
    </source>
</reference>
<evidence type="ECO:0000255" key="1">
    <source>
        <dbReference type="HAMAP-Rule" id="MF_00051"/>
    </source>
</evidence>
<protein>
    <recommendedName>
        <fullName evidence="1">Serine hydroxymethyltransferase 1</fullName>
        <shortName evidence="1">SHMT 1</shortName>
        <shortName evidence="1">Serine methylase 1</shortName>
        <ecNumber evidence="1">2.1.2.1</ecNumber>
    </recommendedName>
</protein>
<accession>Q8UG75</accession>
<organism>
    <name type="scientific">Agrobacterium fabrum (strain C58 / ATCC 33970)</name>
    <name type="common">Agrobacterium tumefaciens (strain C58)</name>
    <dbReference type="NCBI Taxonomy" id="176299"/>
    <lineage>
        <taxon>Bacteria</taxon>
        <taxon>Pseudomonadati</taxon>
        <taxon>Pseudomonadota</taxon>
        <taxon>Alphaproteobacteria</taxon>
        <taxon>Hyphomicrobiales</taxon>
        <taxon>Rhizobiaceae</taxon>
        <taxon>Rhizobium/Agrobacterium group</taxon>
        <taxon>Agrobacterium</taxon>
        <taxon>Agrobacterium tumefaciens complex</taxon>
    </lineage>
</organism>
<proteinExistence type="inferred from homology"/>
<dbReference type="EC" id="2.1.2.1" evidence="1"/>
<dbReference type="EMBL" id="AE007869">
    <property type="protein sequence ID" value="AAK86969.2"/>
    <property type="molecule type" value="Genomic_DNA"/>
</dbReference>
<dbReference type="PIR" id="AD2720">
    <property type="entry name" value="AD2720"/>
</dbReference>
<dbReference type="PIR" id="H97501">
    <property type="entry name" value="H97501"/>
</dbReference>
<dbReference type="RefSeq" id="NP_354184.2">
    <property type="nucleotide sequence ID" value="NC_003062.2"/>
</dbReference>
<dbReference type="RefSeq" id="WP_006312829.1">
    <property type="nucleotide sequence ID" value="NC_003062.2"/>
</dbReference>
<dbReference type="SMR" id="Q8UG75"/>
<dbReference type="STRING" id="176299.Atu1165"/>
<dbReference type="EnsemblBacteria" id="AAK86969">
    <property type="protein sequence ID" value="AAK86969"/>
    <property type="gene ID" value="Atu1165"/>
</dbReference>
<dbReference type="GeneID" id="1133203"/>
<dbReference type="KEGG" id="atu:Atu1165"/>
<dbReference type="PATRIC" id="fig|176299.10.peg.1186"/>
<dbReference type="eggNOG" id="COG0112">
    <property type="taxonomic scope" value="Bacteria"/>
</dbReference>
<dbReference type="HOGENOM" id="CLU_022477_2_1_5"/>
<dbReference type="OrthoDB" id="9803846at2"/>
<dbReference type="PhylomeDB" id="Q8UG75"/>
<dbReference type="BioCyc" id="AGRO:ATU1165-MONOMER"/>
<dbReference type="UniPathway" id="UPA00193"/>
<dbReference type="UniPathway" id="UPA00288">
    <property type="reaction ID" value="UER01023"/>
</dbReference>
<dbReference type="Proteomes" id="UP000000813">
    <property type="component" value="Chromosome circular"/>
</dbReference>
<dbReference type="GO" id="GO:0005829">
    <property type="term" value="C:cytosol"/>
    <property type="evidence" value="ECO:0007669"/>
    <property type="project" value="TreeGrafter"/>
</dbReference>
<dbReference type="GO" id="GO:0004372">
    <property type="term" value="F:glycine hydroxymethyltransferase activity"/>
    <property type="evidence" value="ECO:0007669"/>
    <property type="project" value="UniProtKB-UniRule"/>
</dbReference>
<dbReference type="GO" id="GO:0030170">
    <property type="term" value="F:pyridoxal phosphate binding"/>
    <property type="evidence" value="ECO:0007669"/>
    <property type="project" value="UniProtKB-UniRule"/>
</dbReference>
<dbReference type="GO" id="GO:0019264">
    <property type="term" value="P:glycine biosynthetic process from serine"/>
    <property type="evidence" value="ECO:0007669"/>
    <property type="project" value="UniProtKB-UniRule"/>
</dbReference>
<dbReference type="GO" id="GO:0035999">
    <property type="term" value="P:tetrahydrofolate interconversion"/>
    <property type="evidence" value="ECO:0007669"/>
    <property type="project" value="UniProtKB-UniRule"/>
</dbReference>
<dbReference type="CDD" id="cd00378">
    <property type="entry name" value="SHMT"/>
    <property type="match status" value="1"/>
</dbReference>
<dbReference type="FunFam" id="3.40.640.10:FF:000001">
    <property type="entry name" value="Serine hydroxymethyltransferase"/>
    <property type="match status" value="1"/>
</dbReference>
<dbReference type="FunFam" id="3.90.1150.10:FF:000003">
    <property type="entry name" value="Serine hydroxymethyltransferase"/>
    <property type="match status" value="1"/>
</dbReference>
<dbReference type="Gene3D" id="3.90.1150.10">
    <property type="entry name" value="Aspartate Aminotransferase, domain 1"/>
    <property type="match status" value="1"/>
</dbReference>
<dbReference type="Gene3D" id="3.40.640.10">
    <property type="entry name" value="Type I PLP-dependent aspartate aminotransferase-like (Major domain)"/>
    <property type="match status" value="1"/>
</dbReference>
<dbReference type="HAMAP" id="MF_00051">
    <property type="entry name" value="SHMT"/>
    <property type="match status" value="1"/>
</dbReference>
<dbReference type="InterPro" id="IPR015424">
    <property type="entry name" value="PyrdxlP-dep_Trfase"/>
</dbReference>
<dbReference type="InterPro" id="IPR015421">
    <property type="entry name" value="PyrdxlP-dep_Trfase_major"/>
</dbReference>
<dbReference type="InterPro" id="IPR015422">
    <property type="entry name" value="PyrdxlP-dep_Trfase_small"/>
</dbReference>
<dbReference type="InterPro" id="IPR001085">
    <property type="entry name" value="Ser_HO-MeTrfase"/>
</dbReference>
<dbReference type="InterPro" id="IPR049943">
    <property type="entry name" value="Ser_HO-MeTrfase-like"/>
</dbReference>
<dbReference type="InterPro" id="IPR019798">
    <property type="entry name" value="Ser_HO-MeTrfase_PLP_BS"/>
</dbReference>
<dbReference type="InterPro" id="IPR039429">
    <property type="entry name" value="SHMT-like_dom"/>
</dbReference>
<dbReference type="NCBIfam" id="NF000586">
    <property type="entry name" value="PRK00011.1"/>
    <property type="match status" value="1"/>
</dbReference>
<dbReference type="PANTHER" id="PTHR11680">
    <property type="entry name" value="SERINE HYDROXYMETHYLTRANSFERASE"/>
    <property type="match status" value="1"/>
</dbReference>
<dbReference type="PANTHER" id="PTHR11680:SF35">
    <property type="entry name" value="SERINE HYDROXYMETHYLTRANSFERASE 1"/>
    <property type="match status" value="1"/>
</dbReference>
<dbReference type="Pfam" id="PF00464">
    <property type="entry name" value="SHMT"/>
    <property type="match status" value="1"/>
</dbReference>
<dbReference type="PIRSF" id="PIRSF000412">
    <property type="entry name" value="SHMT"/>
    <property type="match status" value="1"/>
</dbReference>
<dbReference type="SUPFAM" id="SSF53383">
    <property type="entry name" value="PLP-dependent transferases"/>
    <property type="match status" value="1"/>
</dbReference>
<dbReference type="PROSITE" id="PS00096">
    <property type="entry name" value="SHMT"/>
    <property type="match status" value="1"/>
</dbReference>
<comment type="function">
    <text evidence="1">Catalyzes the reversible interconversion of serine and glycine with tetrahydrofolate (THF) serving as the one-carbon carrier. This reaction serves as the major source of one-carbon groups required for the biosynthesis of purines, thymidylate, methionine, and other important biomolecules. Also exhibits THF-independent aldolase activity toward beta-hydroxyamino acids, producing glycine and aldehydes, via a retro-aldol mechanism.</text>
</comment>
<comment type="catalytic activity">
    <reaction evidence="1">
        <text>(6R)-5,10-methylene-5,6,7,8-tetrahydrofolate + glycine + H2O = (6S)-5,6,7,8-tetrahydrofolate + L-serine</text>
        <dbReference type="Rhea" id="RHEA:15481"/>
        <dbReference type="ChEBI" id="CHEBI:15377"/>
        <dbReference type="ChEBI" id="CHEBI:15636"/>
        <dbReference type="ChEBI" id="CHEBI:33384"/>
        <dbReference type="ChEBI" id="CHEBI:57305"/>
        <dbReference type="ChEBI" id="CHEBI:57453"/>
        <dbReference type="EC" id="2.1.2.1"/>
    </reaction>
</comment>
<comment type="cofactor">
    <cofactor evidence="1">
        <name>pyridoxal 5'-phosphate</name>
        <dbReference type="ChEBI" id="CHEBI:597326"/>
    </cofactor>
</comment>
<comment type="pathway">
    <text evidence="1">One-carbon metabolism; tetrahydrofolate interconversion.</text>
</comment>
<comment type="pathway">
    <text evidence="1">Amino-acid biosynthesis; glycine biosynthesis; glycine from L-serine: step 1/1.</text>
</comment>
<comment type="subunit">
    <text evidence="1">Homodimer.</text>
</comment>
<comment type="subcellular location">
    <subcellularLocation>
        <location evidence="1">Cytoplasm</location>
    </subcellularLocation>
</comment>
<comment type="similarity">
    <text evidence="1">Belongs to the SHMT family.</text>
</comment>
<sequence length="429" mass="46562">MSNTDAFFSRPLAEVDPDIFGAIEKELGRQRHEIELIASENIVSRAVLEAQGSIMTNKYAEGYPGKRYYGGCQFVDIAEELAIERAKKLFGVNFANVQPNSGSQMNQAVFLALLQPGDTFMGLDLNSGGHLTHGSPVNMSGKWFNVVSYGVREGDNLLDMDEVERKAKETRPKLILAGGTAYSRVWDWKRFREIADEVGAYLMVDMAHIAGLVAGGQHPSPFPHCHVATTTTHKSLRGPRGGMILTNDEDLAKKFNSAVFPGLQGGPLMHVIAAKAVAFGEALQPEFKDYAAQVVKNAKALAETLIEGGLDVVSGGTDNHLMLVDLRKKNATGKRAEAALGRAYITCNKNGIPFDPEKPFVTSGVRLGTPAGTTRGFKEAEFREIGKLIVEVLDGLKVANSDEGNASVEAAVREKVVGLTDRFPMYPYM</sequence>